<comment type="function">
    <text evidence="1">One of the primary rRNA binding proteins, it binds directly to 16S rRNA where it nucleates assembly of the body of the 30S subunit.</text>
</comment>
<comment type="function">
    <text evidence="1">With S5 and S12 plays an important role in translational accuracy.</text>
</comment>
<comment type="subunit">
    <text evidence="1">Part of the 30S ribosomal subunit. Contacts protein S5. The interaction surface between S4 and S5 is involved in control of translational fidelity.</text>
</comment>
<comment type="similarity">
    <text evidence="1">Belongs to the universal ribosomal protein uS4 family.</text>
</comment>
<evidence type="ECO:0000255" key="1">
    <source>
        <dbReference type="HAMAP-Rule" id="MF_01306"/>
    </source>
</evidence>
<evidence type="ECO:0000305" key="2"/>
<accession>Q9CIS2</accession>
<sequence length="203" mass="23165">MSRYTGPSWKQSRRYGISLSGSGKEIARRNYVPGQHGPNNRSKLSEYGLQLAEKQKLRFSYGLSERQFRNLYIAATKVKEGTVGFNFMTLLEQRLDNVVFRLGLATTRRQARQFVNHGHILVDGKRVDIPSFRVQPGQVISVREKSMKVPAILEAVEATKGRANFVSFDADKLEGTLVRLPERDEINPEINEALIVEFYNKMM</sequence>
<gene>
    <name evidence="1" type="primary">rpsD</name>
    <name type="ordered locus">LL0284</name>
    <name type="ORF">L0381</name>
</gene>
<organism>
    <name type="scientific">Lactococcus lactis subsp. lactis (strain IL1403)</name>
    <name type="common">Streptococcus lactis</name>
    <dbReference type="NCBI Taxonomy" id="272623"/>
    <lineage>
        <taxon>Bacteria</taxon>
        <taxon>Bacillati</taxon>
        <taxon>Bacillota</taxon>
        <taxon>Bacilli</taxon>
        <taxon>Lactobacillales</taxon>
        <taxon>Streptococcaceae</taxon>
        <taxon>Lactococcus</taxon>
    </lineage>
</organism>
<proteinExistence type="inferred from homology"/>
<dbReference type="EMBL" id="AE005176">
    <property type="protein sequence ID" value="AAK04382.1"/>
    <property type="molecule type" value="Genomic_DNA"/>
</dbReference>
<dbReference type="PIR" id="D86660">
    <property type="entry name" value="D86660"/>
</dbReference>
<dbReference type="RefSeq" id="NP_266440.1">
    <property type="nucleotide sequence ID" value="NC_002662.1"/>
</dbReference>
<dbReference type="RefSeq" id="WP_004255752.1">
    <property type="nucleotide sequence ID" value="NC_002662.1"/>
</dbReference>
<dbReference type="SMR" id="Q9CIS2"/>
<dbReference type="PaxDb" id="272623-L0381"/>
<dbReference type="EnsemblBacteria" id="AAK04382">
    <property type="protein sequence ID" value="AAK04382"/>
    <property type="gene ID" value="L0381"/>
</dbReference>
<dbReference type="GeneID" id="89632464"/>
<dbReference type="KEGG" id="lla:L0381"/>
<dbReference type="PATRIC" id="fig|272623.7.peg.313"/>
<dbReference type="eggNOG" id="COG0522">
    <property type="taxonomic scope" value="Bacteria"/>
</dbReference>
<dbReference type="HOGENOM" id="CLU_092403_0_1_9"/>
<dbReference type="OrthoDB" id="9803672at2"/>
<dbReference type="Proteomes" id="UP000002196">
    <property type="component" value="Chromosome"/>
</dbReference>
<dbReference type="GO" id="GO:0015935">
    <property type="term" value="C:small ribosomal subunit"/>
    <property type="evidence" value="ECO:0007669"/>
    <property type="project" value="InterPro"/>
</dbReference>
<dbReference type="GO" id="GO:0019843">
    <property type="term" value="F:rRNA binding"/>
    <property type="evidence" value="ECO:0007669"/>
    <property type="project" value="UniProtKB-UniRule"/>
</dbReference>
<dbReference type="GO" id="GO:0003735">
    <property type="term" value="F:structural constituent of ribosome"/>
    <property type="evidence" value="ECO:0007669"/>
    <property type="project" value="InterPro"/>
</dbReference>
<dbReference type="GO" id="GO:0042274">
    <property type="term" value="P:ribosomal small subunit biogenesis"/>
    <property type="evidence" value="ECO:0007669"/>
    <property type="project" value="TreeGrafter"/>
</dbReference>
<dbReference type="GO" id="GO:0006412">
    <property type="term" value="P:translation"/>
    <property type="evidence" value="ECO:0007669"/>
    <property type="project" value="UniProtKB-UniRule"/>
</dbReference>
<dbReference type="CDD" id="cd00165">
    <property type="entry name" value="S4"/>
    <property type="match status" value="1"/>
</dbReference>
<dbReference type="FunFam" id="3.10.290.10:FF:000001">
    <property type="entry name" value="30S ribosomal protein S4"/>
    <property type="match status" value="1"/>
</dbReference>
<dbReference type="Gene3D" id="1.10.1050.10">
    <property type="entry name" value="Ribosomal Protein S4 Delta 41, Chain A, domain 1"/>
    <property type="match status" value="1"/>
</dbReference>
<dbReference type="Gene3D" id="3.10.290.10">
    <property type="entry name" value="RNA-binding S4 domain"/>
    <property type="match status" value="1"/>
</dbReference>
<dbReference type="HAMAP" id="MF_01306_B">
    <property type="entry name" value="Ribosomal_uS4_B"/>
    <property type="match status" value="1"/>
</dbReference>
<dbReference type="InterPro" id="IPR022801">
    <property type="entry name" value="Ribosomal_uS4"/>
</dbReference>
<dbReference type="InterPro" id="IPR005709">
    <property type="entry name" value="Ribosomal_uS4_bac-type"/>
</dbReference>
<dbReference type="InterPro" id="IPR018079">
    <property type="entry name" value="Ribosomal_uS4_CS"/>
</dbReference>
<dbReference type="InterPro" id="IPR001912">
    <property type="entry name" value="Ribosomal_uS4_N"/>
</dbReference>
<dbReference type="InterPro" id="IPR002942">
    <property type="entry name" value="S4_RNA-bd"/>
</dbReference>
<dbReference type="InterPro" id="IPR036986">
    <property type="entry name" value="S4_RNA-bd_sf"/>
</dbReference>
<dbReference type="NCBIfam" id="NF003717">
    <property type="entry name" value="PRK05327.1"/>
    <property type="match status" value="1"/>
</dbReference>
<dbReference type="NCBIfam" id="TIGR01017">
    <property type="entry name" value="rpsD_bact"/>
    <property type="match status" value="1"/>
</dbReference>
<dbReference type="PANTHER" id="PTHR11831">
    <property type="entry name" value="30S 40S RIBOSOMAL PROTEIN"/>
    <property type="match status" value="1"/>
</dbReference>
<dbReference type="PANTHER" id="PTHR11831:SF4">
    <property type="entry name" value="SMALL RIBOSOMAL SUBUNIT PROTEIN US4M"/>
    <property type="match status" value="1"/>
</dbReference>
<dbReference type="Pfam" id="PF00163">
    <property type="entry name" value="Ribosomal_S4"/>
    <property type="match status" value="1"/>
</dbReference>
<dbReference type="Pfam" id="PF01479">
    <property type="entry name" value="S4"/>
    <property type="match status" value="1"/>
</dbReference>
<dbReference type="SMART" id="SM01390">
    <property type="entry name" value="Ribosomal_S4"/>
    <property type="match status" value="1"/>
</dbReference>
<dbReference type="SMART" id="SM00363">
    <property type="entry name" value="S4"/>
    <property type="match status" value="1"/>
</dbReference>
<dbReference type="SUPFAM" id="SSF55174">
    <property type="entry name" value="Alpha-L RNA-binding motif"/>
    <property type="match status" value="1"/>
</dbReference>
<dbReference type="PROSITE" id="PS00632">
    <property type="entry name" value="RIBOSOMAL_S4"/>
    <property type="match status" value="1"/>
</dbReference>
<dbReference type="PROSITE" id="PS50889">
    <property type="entry name" value="S4"/>
    <property type="match status" value="1"/>
</dbReference>
<keyword id="KW-1185">Reference proteome</keyword>
<keyword id="KW-0687">Ribonucleoprotein</keyword>
<keyword id="KW-0689">Ribosomal protein</keyword>
<keyword id="KW-0694">RNA-binding</keyword>
<keyword id="KW-0699">rRNA-binding</keyword>
<reference key="1">
    <citation type="journal article" date="2001" name="Genome Res.">
        <title>The complete genome sequence of the lactic acid bacterium Lactococcus lactis ssp. lactis IL1403.</title>
        <authorList>
            <person name="Bolotin A."/>
            <person name="Wincker P."/>
            <person name="Mauger S."/>
            <person name="Jaillon O."/>
            <person name="Malarme K."/>
            <person name="Weissenbach J."/>
            <person name="Ehrlich S.D."/>
            <person name="Sorokin A."/>
        </authorList>
    </citation>
    <scope>NUCLEOTIDE SEQUENCE [LARGE SCALE GENOMIC DNA]</scope>
    <source>
        <strain>IL1403</strain>
    </source>
</reference>
<name>RS4_LACLA</name>
<protein>
    <recommendedName>
        <fullName evidence="1">Small ribosomal subunit protein uS4</fullName>
    </recommendedName>
    <alternativeName>
        <fullName evidence="2">30S ribosomal protein S4</fullName>
    </alternativeName>
</protein>
<feature type="chain" id="PRO_0000132397" description="Small ribosomal subunit protein uS4">
    <location>
        <begin position="1"/>
        <end position="203"/>
    </location>
</feature>
<feature type="domain" description="S4 RNA-binding" evidence="1">
    <location>
        <begin position="93"/>
        <end position="156"/>
    </location>
</feature>